<organism>
    <name type="scientific">Bacillus amyloliquefaciens</name>
    <name type="common">Bacillus velezensis</name>
    <dbReference type="NCBI Taxonomy" id="1390"/>
    <lineage>
        <taxon>Bacteria</taxon>
        <taxon>Bacillati</taxon>
        <taxon>Bacillota</taxon>
        <taxon>Bacilli</taxon>
        <taxon>Bacillales</taxon>
        <taxon>Bacillaceae</taxon>
        <taxon>Bacillus</taxon>
        <taxon>Bacillus amyloliquefaciens group</taxon>
    </lineage>
</organism>
<accession>Q03091</accession>
<reference key="1">
    <citation type="journal article" date="1992" name="Eur. J. Biochem.">
        <title>Gene cloning and characterization of a novel extracellular ribonuclease of Bacillus subtilis.</title>
        <authorList>
            <person name="Nakamura A."/>
            <person name="Koide Y."/>
            <person name="Miyazaki H."/>
            <person name="Kitamura A."/>
            <person name="Masaki H."/>
            <person name="Beppu T."/>
            <person name="Uozumi T."/>
        </authorList>
    </citation>
    <scope>NUCLEOTIDE SEQUENCE [GENOMIC DNA]</scope>
    <scope>PROTEIN SEQUENCE OF 52-63</scope>
    <source>
        <strain>NBRC 3034 / 306</strain>
    </source>
</reference>
<feature type="signal peptide" evidence="1">
    <location>
        <begin position="1"/>
        <end position="24"/>
    </location>
</feature>
<feature type="propeptide" id="PRO_0000020830" evidence="1">
    <location>
        <begin position="25"/>
        <end position="51"/>
    </location>
</feature>
<feature type="chain" id="PRO_0000020831" description="Extracellular ribonuclease">
    <location>
        <begin position="52"/>
        <end position="289"/>
    </location>
</feature>
<feature type="region of interest" description="Disordered" evidence="2">
    <location>
        <begin position="177"/>
        <end position="197"/>
    </location>
</feature>
<comment type="function">
    <text>Mg(2+)-activated ribonuclease which hydrolyzes RNA apparently nonspecifically into oligonucleotides with 5'-terminal phosphate.</text>
</comment>
<comment type="subcellular location">
    <subcellularLocation>
        <location>Secreted</location>
    </subcellularLocation>
</comment>
<proteinExistence type="evidence at protein level"/>
<sequence>MTKKLWFLPIVCLFFILGWTAPSASAGAPADTNLYSRLAVSTAGGTTLFPQTSSAVITPSADTETYYKEASGKSGTALKSALHRIISGHTKLSYSQVWNALKETDEDPANPNNVILLYTQESRAKSKNGGSVGDWNREHVWAKSHGNFGTAAGPGTDIHHLRPADVQVNSARGNMDFDNGGSEYPKAPGNYYDGDSWEPRDEVKGDVARMLFYMAVRYEGGDGYPDLELNDKTGNGSAPYMGKLSVLLKWNKQDPVDSKEKRRNEIIYEDYQHNRNPFIDHPEWADEIW</sequence>
<evidence type="ECO:0000255" key="1"/>
<evidence type="ECO:0000256" key="2">
    <source>
        <dbReference type="SAM" id="MobiDB-lite"/>
    </source>
</evidence>
<dbReference type="EC" id="3.1.-.-"/>
<dbReference type="EMBL" id="D01097">
    <property type="protein sequence ID" value="BAA00882.1"/>
    <property type="molecule type" value="Genomic_DNA"/>
</dbReference>
<dbReference type="PIR" id="S29271">
    <property type="entry name" value="S29271"/>
</dbReference>
<dbReference type="RefSeq" id="WP_003151902.1">
    <property type="nucleotide sequence ID" value="NZ_QRGX01000002.1"/>
</dbReference>
<dbReference type="STRING" id="692420.BAMF_3049"/>
<dbReference type="eggNOG" id="COG2356">
    <property type="taxonomic scope" value="Bacteria"/>
</dbReference>
<dbReference type="GO" id="GO:0005576">
    <property type="term" value="C:extracellular region"/>
    <property type="evidence" value="ECO:0007669"/>
    <property type="project" value="UniProtKB-SubCell"/>
</dbReference>
<dbReference type="GO" id="GO:0004518">
    <property type="term" value="F:nuclease activity"/>
    <property type="evidence" value="ECO:0007669"/>
    <property type="project" value="UniProtKB-KW"/>
</dbReference>
<dbReference type="InterPro" id="IPR007346">
    <property type="entry name" value="Endonuclease-I"/>
</dbReference>
<dbReference type="InterPro" id="IPR044925">
    <property type="entry name" value="His-Me_finger_sf"/>
</dbReference>
<dbReference type="PANTHER" id="PTHR33607">
    <property type="entry name" value="ENDONUCLEASE-1"/>
    <property type="match status" value="1"/>
</dbReference>
<dbReference type="PANTHER" id="PTHR33607:SF2">
    <property type="entry name" value="ENDONUCLEASE-1"/>
    <property type="match status" value="1"/>
</dbReference>
<dbReference type="Pfam" id="PF04231">
    <property type="entry name" value="Endonuclease_1"/>
    <property type="match status" value="1"/>
</dbReference>
<dbReference type="SUPFAM" id="SSF54060">
    <property type="entry name" value="His-Me finger endonucleases"/>
    <property type="match status" value="1"/>
</dbReference>
<gene>
    <name type="primary">bsn</name>
</gene>
<keyword id="KW-0903">Direct protein sequencing</keyword>
<keyword id="KW-0378">Hydrolase</keyword>
<keyword id="KW-0540">Nuclease</keyword>
<keyword id="KW-0964">Secreted</keyword>
<keyword id="KW-0732">Signal</keyword>
<protein>
    <recommendedName>
        <fullName>Extracellular ribonuclease</fullName>
        <ecNumber>3.1.-.-</ecNumber>
    </recommendedName>
</protein>
<name>BSN1_BACAM</name>